<sequence>MPFTLGQRWISDTESELGLGTVVAVDARTVTLLFPSTGENRLYARSDSPVTRVMFNPGDTITSHDGWQMQVEEVKEENGLLTYIGTRLDTEESGVALREVFLDSKLVFSKPQDRLFAGQIDRMDRFALRYRARKYSSEQFRMPYSGLRGQRTSLIPHQLNIAHDVGRRHAPRVLLADEVGLGKTIEAGMILHQQLLSGAAERVLIIVPETLQHQWLVEMLRRFNLRFALFDDERYAEAQHDAYNPFDTEQLVICSLDFARRSKQRLEHLCEAEWDLLVVDEAHHLVWSEDAPSREYQAIEQLAEHVPGVLLLTATPEQLGMESHFARLRLLDPNRFHDFAQFVEEQKNYRPVADAVAMLLAGNKLSNDELNMLGEMIGEQDIEPLLQAANSDSEDAQSARQELVSMLMDRHGTSRVLFRNTRNGVKGFPKRELHTIKLPLPTQYQTAIKVSGIMGARKSAEDRARDMLYPERIYQEFEGDNATWWNFDPRVEWLMGYLTSHRSQKVLVICAKAATALQLEQVLREREGIRAAVFHEGMSIIERDRAAAWFAEEDTGAQVLLCSEIGSEGRNFQFASHMVMFDLPFNPDLLEQRIGRLDRIGQAHDIQIHVPYLEKTAQSVLVRWYHEGLDAFEHTCPTGRTIYDSVYNDLINYLASPDQTEGFDDLIKSCREQHEALKAQLEQGRDRLLEIHSNGGEKAQALAESIEEQDDDTNLIAFAMNLFDIIGINQDDRGDNMIVLTPSDHMLVPDFPGLSEDGITITFDREVALAREDAQFITWEHPLIRNGLDLILSGDTGSSTISLLKNKALPVGTLLVELIYVVEAQAPKQLQLNRFLPPTPVRMLLDKNGNNLAAQVEFETFNRQLNAVNRHTGSKLVNAVQQDVHAILQLGEAQIEKSARALIDAARNEADEKLSAELSRLEALRAVNPNIRDDELTAIESNRQQVMESLDQAGWRLDALRLIVVTHQ</sequence>
<keyword id="KW-0010">Activator</keyword>
<keyword id="KW-0067">ATP-binding</keyword>
<keyword id="KW-0238">DNA-binding</keyword>
<keyword id="KW-0347">Helicase</keyword>
<keyword id="KW-0378">Hydrolase</keyword>
<keyword id="KW-0547">Nucleotide-binding</keyword>
<keyword id="KW-1185">Reference proteome</keyword>
<keyword id="KW-0804">Transcription</keyword>
<keyword id="KW-0805">Transcription regulation</keyword>
<comment type="function">
    <text evidence="2">Transcription regulator that activates transcription by stimulating RNA polymerase (RNAP) recycling in case of stress conditions such as supercoiled DNA or high salt concentrations. Probably acts by releasing the RNAP, when it is trapped or immobilized on tightly supercoiled DNA. Does not activate transcription on linear DNA. Probably not involved in DNA repair.</text>
</comment>
<comment type="subunit">
    <text evidence="2">Interacts with the RNAP. Has a higher affinity for the core RNAP than for the holoenzyme. Its ATPase activity is stimulated by binding to RNAP.</text>
</comment>
<comment type="similarity">
    <text evidence="2">Belongs to the SNF2/RAD54 helicase family. RapA subfamily.</text>
</comment>
<gene>
    <name evidence="2" type="primary">rapA</name>
    <name type="synonym">hepA</name>
    <name type="ordered locus">SF0054</name>
    <name type="ordered locus">S0056</name>
</gene>
<feature type="initiator methionine" description="Removed" evidence="1">
    <location>
        <position position="1"/>
    </location>
</feature>
<feature type="chain" id="PRO_0000207187" description="RNA polymerase-associated protein RapA">
    <location>
        <begin position="2"/>
        <end position="968"/>
    </location>
</feature>
<feature type="domain" description="Helicase ATP-binding" evidence="2">
    <location>
        <begin position="164"/>
        <end position="334"/>
    </location>
</feature>
<feature type="domain" description="Helicase C-terminal" evidence="2">
    <location>
        <begin position="490"/>
        <end position="662"/>
    </location>
</feature>
<feature type="short sequence motif" description="DEAH box">
    <location>
        <begin position="280"/>
        <end position="283"/>
    </location>
</feature>
<feature type="binding site" evidence="2">
    <location>
        <begin position="177"/>
        <end position="184"/>
    </location>
    <ligand>
        <name>ATP</name>
        <dbReference type="ChEBI" id="CHEBI:30616"/>
    </ligand>
</feature>
<feature type="sequence conflict" description="In Ref. 2; AAP15600." evidence="3" ref="2">
    <original>R</original>
    <variation>L</variation>
    <location>
        <position position="530"/>
    </location>
</feature>
<dbReference type="EC" id="3.6.4.-" evidence="2"/>
<dbReference type="EMBL" id="AE005674">
    <property type="protein sequence ID" value="AAN41720.1"/>
    <property type="molecule type" value="Genomic_DNA"/>
</dbReference>
<dbReference type="EMBL" id="AE014073">
    <property type="protein sequence ID" value="AAP15600.1"/>
    <property type="molecule type" value="Genomic_DNA"/>
</dbReference>
<dbReference type="RefSeq" id="NP_706013.1">
    <property type="nucleotide sequence ID" value="NC_004337.2"/>
</dbReference>
<dbReference type="RefSeq" id="WP_001117023.1">
    <property type="nucleotide sequence ID" value="NZ_WPGW01000005.1"/>
</dbReference>
<dbReference type="SMR" id="Q7UDT5"/>
<dbReference type="STRING" id="198214.SF0054"/>
<dbReference type="PaxDb" id="198214-SF0054"/>
<dbReference type="GeneID" id="1024561"/>
<dbReference type="KEGG" id="sfl:SF0054"/>
<dbReference type="KEGG" id="sfx:S0056"/>
<dbReference type="PATRIC" id="fig|198214.7.peg.63"/>
<dbReference type="HOGENOM" id="CLU_011520_0_0_6"/>
<dbReference type="Proteomes" id="UP000001006">
    <property type="component" value="Chromosome"/>
</dbReference>
<dbReference type="Proteomes" id="UP000002673">
    <property type="component" value="Chromosome"/>
</dbReference>
<dbReference type="GO" id="GO:0005524">
    <property type="term" value="F:ATP binding"/>
    <property type="evidence" value="ECO:0007669"/>
    <property type="project" value="UniProtKB-UniRule"/>
</dbReference>
<dbReference type="GO" id="GO:0003677">
    <property type="term" value="F:DNA binding"/>
    <property type="evidence" value="ECO:0007669"/>
    <property type="project" value="UniProtKB-KW"/>
</dbReference>
<dbReference type="GO" id="GO:0004386">
    <property type="term" value="F:helicase activity"/>
    <property type="evidence" value="ECO:0007669"/>
    <property type="project" value="UniProtKB-UniRule"/>
</dbReference>
<dbReference type="GO" id="GO:0016817">
    <property type="term" value="F:hydrolase activity, acting on acid anhydrides"/>
    <property type="evidence" value="ECO:0007669"/>
    <property type="project" value="InterPro"/>
</dbReference>
<dbReference type="GO" id="GO:0006355">
    <property type="term" value="P:regulation of DNA-templated transcription"/>
    <property type="evidence" value="ECO:0007669"/>
    <property type="project" value="UniProtKB-UniRule"/>
</dbReference>
<dbReference type="CDD" id="cd18011">
    <property type="entry name" value="DEXDc_RapA"/>
    <property type="match status" value="1"/>
</dbReference>
<dbReference type="CDD" id="cd18793">
    <property type="entry name" value="SF2_C_SNF"/>
    <property type="match status" value="1"/>
</dbReference>
<dbReference type="FunFam" id="2.30.30.140:FF:000020">
    <property type="entry name" value="RNA polymerase-associated protein RapA"/>
    <property type="match status" value="1"/>
</dbReference>
<dbReference type="FunFam" id="2.30.30.930:FF:000001">
    <property type="entry name" value="RNA polymerase-associated protein RapA"/>
    <property type="match status" value="1"/>
</dbReference>
<dbReference type="FunFam" id="3.30.360.80:FF:000001">
    <property type="entry name" value="RNA polymerase-associated protein RapA"/>
    <property type="match status" value="1"/>
</dbReference>
<dbReference type="FunFam" id="3.40.50.10810:FF:000012">
    <property type="entry name" value="RNA polymerase-associated protein RapA"/>
    <property type="match status" value="1"/>
</dbReference>
<dbReference type="FunFam" id="3.40.50.300:FF:000350">
    <property type="entry name" value="RNA polymerase-associated protein RapA"/>
    <property type="match status" value="1"/>
</dbReference>
<dbReference type="Gene3D" id="2.30.30.140">
    <property type="match status" value="1"/>
</dbReference>
<dbReference type="Gene3D" id="2.30.30.930">
    <property type="match status" value="1"/>
</dbReference>
<dbReference type="Gene3D" id="3.30.360.80">
    <property type="match status" value="1"/>
</dbReference>
<dbReference type="Gene3D" id="6.10.140.1500">
    <property type="match status" value="1"/>
</dbReference>
<dbReference type="Gene3D" id="6.10.140.2230">
    <property type="match status" value="1"/>
</dbReference>
<dbReference type="Gene3D" id="3.40.50.300">
    <property type="entry name" value="P-loop containing nucleotide triphosphate hydrolases"/>
    <property type="match status" value="1"/>
</dbReference>
<dbReference type="Gene3D" id="3.40.50.10810">
    <property type="entry name" value="Tandem AAA-ATPase domain"/>
    <property type="match status" value="1"/>
</dbReference>
<dbReference type="HAMAP" id="MF_01821">
    <property type="entry name" value="Helicase_RapA"/>
    <property type="match status" value="1"/>
</dbReference>
<dbReference type="InterPro" id="IPR014001">
    <property type="entry name" value="Helicase_ATP-bd"/>
</dbReference>
<dbReference type="InterPro" id="IPR001650">
    <property type="entry name" value="Helicase_C-like"/>
</dbReference>
<dbReference type="InterPro" id="IPR023949">
    <property type="entry name" value="Helicase_RapA"/>
</dbReference>
<dbReference type="InterPro" id="IPR027417">
    <property type="entry name" value="P-loop_NTPase"/>
</dbReference>
<dbReference type="InterPro" id="IPR022737">
    <property type="entry name" value="RapA_C"/>
</dbReference>
<dbReference type="InterPro" id="IPR038718">
    <property type="entry name" value="SNF2-like_sf"/>
</dbReference>
<dbReference type="InterPro" id="IPR049730">
    <property type="entry name" value="SNF2/RAD54-like_C"/>
</dbReference>
<dbReference type="InterPro" id="IPR000330">
    <property type="entry name" value="SNF2_N"/>
</dbReference>
<dbReference type="InterPro" id="IPR040765">
    <property type="entry name" value="Tudor_1_RapA"/>
</dbReference>
<dbReference type="InterPro" id="IPR040766">
    <property type="entry name" value="Tudor_2_RapA"/>
</dbReference>
<dbReference type="NCBIfam" id="NF003426">
    <property type="entry name" value="PRK04914.1"/>
    <property type="match status" value="1"/>
</dbReference>
<dbReference type="PANTHER" id="PTHR45766">
    <property type="entry name" value="DNA ANNEALING HELICASE AND ENDONUCLEASE ZRANB3 FAMILY MEMBER"/>
    <property type="match status" value="1"/>
</dbReference>
<dbReference type="PANTHER" id="PTHR45766:SF6">
    <property type="entry name" value="SWI_SNF-RELATED MATRIX-ASSOCIATED ACTIN-DEPENDENT REGULATOR OF CHROMATIN SUBFAMILY A-LIKE PROTEIN 1"/>
    <property type="match status" value="1"/>
</dbReference>
<dbReference type="Pfam" id="PF00271">
    <property type="entry name" value="Helicase_C"/>
    <property type="match status" value="1"/>
</dbReference>
<dbReference type="Pfam" id="PF12137">
    <property type="entry name" value="RapA_C"/>
    <property type="match status" value="1"/>
</dbReference>
<dbReference type="Pfam" id="PF00176">
    <property type="entry name" value="SNF2-rel_dom"/>
    <property type="match status" value="1"/>
</dbReference>
<dbReference type="Pfam" id="PF18339">
    <property type="entry name" value="Tudor_1_RapA"/>
    <property type="match status" value="1"/>
</dbReference>
<dbReference type="Pfam" id="PF18337">
    <property type="entry name" value="Tudor_RapA"/>
    <property type="match status" value="1"/>
</dbReference>
<dbReference type="SMART" id="SM00487">
    <property type="entry name" value="DEXDc"/>
    <property type="match status" value="1"/>
</dbReference>
<dbReference type="SMART" id="SM00490">
    <property type="entry name" value="HELICc"/>
    <property type="match status" value="1"/>
</dbReference>
<dbReference type="SUPFAM" id="SSF52540">
    <property type="entry name" value="P-loop containing nucleoside triphosphate hydrolases"/>
    <property type="match status" value="2"/>
</dbReference>
<dbReference type="PROSITE" id="PS51192">
    <property type="entry name" value="HELICASE_ATP_BIND_1"/>
    <property type="match status" value="1"/>
</dbReference>
<dbReference type="PROSITE" id="PS51194">
    <property type="entry name" value="HELICASE_CTER"/>
    <property type="match status" value="1"/>
</dbReference>
<reference key="1">
    <citation type="journal article" date="2002" name="Nucleic Acids Res.">
        <title>Genome sequence of Shigella flexneri 2a: insights into pathogenicity through comparison with genomes of Escherichia coli K12 and O157.</title>
        <authorList>
            <person name="Jin Q."/>
            <person name="Yuan Z."/>
            <person name="Xu J."/>
            <person name="Wang Y."/>
            <person name="Shen Y."/>
            <person name="Lu W."/>
            <person name="Wang J."/>
            <person name="Liu H."/>
            <person name="Yang J."/>
            <person name="Yang F."/>
            <person name="Zhang X."/>
            <person name="Zhang J."/>
            <person name="Yang G."/>
            <person name="Wu H."/>
            <person name="Qu D."/>
            <person name="Dong J."/>
            <person name="Sun L."/>
            <person name="Xue Y."/>
            <person name="Zhao A."/>
            <person name="Gao Y."/>
            <person name="Zhu J."/>
            <person name="Kan B."/>
            <person name="Ding K."/>
            <person name="Chen S."/>
            <person name="Cheng H."/>
            <person name="Yao Z."/>
            <person name="He B."/>
            <person name="Chen R."/>
            <person name="Ma D."/>
            <person name="Qiang B."/>
            <person name="Wen Y."/>
            <person name="Hou Y."/>
            <person name="Yu J."/>
        </authorList>
    </citation>
    <scope>NUCLEOTIDE SEQUENCE [LARGE SCALE GENOMIC DNA]</scope>
    <source>
        <strain>301 / Serotype 2a</strain>
    </source>
</reference>
<reference key="2">
    <citation type="journal article" date="2003" name="Infect. Immun.">
        <title>Complete genome sequence and comparative genomics of Shigella flexneri serotype 2a strain 2457T.</title>
        <authorList>
            <person name="Wei J."/>
            <person name="Goldberg M.B."/>
            <person name="Burland V."/>
            <person name="Venkatesan M.M."/>
            <person name="Deng W."/>
            <person name="Fournier G."/>
            <person name="Mayhew G.F."/>
            <person name="Plunkett G. III"/>
            <person name="Rose D.J."/>
            <person name="Darling A."/>
            <person name="Mau B."/>
            <person name="Perna N.T."/>
            <person name="Payne S.M."/>
            <person name="Runyen-Janecky L.J."/>
            <person name="Zhou S."/>
            <person name="Schwartz D.C."/>
            <person name="Blattner F.R."/>
        </authorList>
    </citation>
    <scope>NUCLEOTIDE SEQUENCE [LARGE SCALE GENOMIC DNA]</scope>
    <source>
        <strain>ATCC 700930 / 2457T / Serotype 2a</strain>
    </source>
</reference>
<proteinExistence type="inferred from homology"/>
<protein>
    <recommendedName>
        <fullName evidence="2">RNA polymerase-associated protein RapA</fullName>
        <ecNumber evidence="2">3.6.4.-</ecNumber>
    </recommendedName>
    <alternativeName>
        <fullName evidence="2">ATP-dependent helicase HepA</fullName>
    </alternativeName>
</protein>
<name>RAPA_SHIFL</name>
<evidence type="ECO:0000250" key="1"/>
<evidence type="ECO:0000255" key="2">
    <source>
        <dbReference type="HAMAP-Rule" id="MF_01821"/>
    </source>
</evidence>
<evidence type="ECO:0000305" key="3"/>
<accession>Q7UDT5</accession>
<accession>Q83MG6</accession>
<organism>
    <name type="scientific">Shigella flexneri</name>
    <dbReference type="NCBI Taxonomy" id="623"/>
    <lineage>
        <taxon>Bacteria</taxon>
        <taxon>Pseudomonadati</taxon>
        <taxon>Pseudomonadota</taxon>
        <taxon>Gammaproteobacteria</taxon>
        <taxon>Enterobacterales</taxon>
        <taxon>Enterobacteriaceae</taxon>
        <taxon>Shigella</taxon>
    </lineage>
</organism>